<gene>
    <name evidence="1" type="primary">atpA</name>
    <name type="ordered locus">Meso_3216</name>
</gene>
<feature type="chain" id="PRO_0000256096" description="ATP synthase subunit alpha">
    <location>
        <begin position="1"/>
        <end position="509"/>
    </location>
</feature>
<feature type="binding site" evidence="1">
    <location>
        <begin position="169"/>
        <end position="176"/>
    </location>
    <ligand>
        <name>ATP</name>
        <dbReference type="ChEBI" id="CHEBI:30616"/>
    </ligand>
</feature>
<feature type="site" description="Required for activity" evidence="1">
    <location>
        <position position="370"/>
    </location>
</feature>
<sequence>MDIRAAEISAILKDQIKNFGKEAEVSEVGQVLSVGDGIARVYGLDNVQAGEMVEFPGGIRGMALNLEVDNVGVVIFGADRDIKEGDTVKRTGAIVEVPVGPGLLGRVVDALGNPIDGKGPIQATERRRVDVKAPGIIPRKSVHEPMSTGLKAIDALIPIGRGQRELIIGDRQTGKTAIILDTFLNQKPLNDGDDESQKLYCIYVAVGQKRSTVAQFVKVLEERGALEYSIVVAATASDPAPMQFLAPFAGCAMGEYFRDNGKHAVIAYDDLSKQAVAYRQMSLLLRRPPGREAYPGDVFYLHSRLLERAAKMNDDNGSGSLTALPVIETQANDVSAYIPTNVISITDGQIFLETNLFFQGVRPAVNVGLSVSRVGSAAQVKAMKQVAGSIKGELAQYREMAAFAQFGSDLDAATQRLLNRGARLTELLKQPQFSPLKTEEQVVVIFAGVNGYLDALALRDVGRFEQGLLTHMRSEGKEILDAIRVEKALSDDLRAKLKAEIDAYAKNFS</sequence>
<reference key="1">
    <citation type="submission" date="2006-06" db="EMBL/GenBank/DDBJ databases">
        <title>Complete sequence of chromosome of Mesorhizobium sp. BNC1.</title>
        <authorList>
            <consortium name="US DOE Joint Genome Institute"/>
            <person name="Copeland A."/>
            <person name="Lucas S."/>
            <person name="Lapidus A."/>
            <person name="Barry K."/>
            <person name="Detter J.C."/>
            <person name="Glavina del Rio T."/>
            <person name="Hammon N."/>
            <person name="Israni S."/>
            <person name="Dalin E."/>
            <person name="Tice H."/>
            <person name="Pitluck S."/>
            <person name="Chertkov O."/>
            <person name="Brettin T."/>
            <person name="Bruce D."/>
            <person name="Han C."/>
            <person name="Tapia R."/>
            <person name="Gilna P."/>
            <person name="Schmutz J."/>
            <person name="Larimer F."/>
            <person name="Land M."/>
            <person name="Hauser L."/>
            <person name="Kyrpides N."/>
            <person name="Mikhailova N."/>
            <person name="Richardson P."/>
        </authorList>
    </citation>
    <scope>NUCLEOTIDE SEQUENCE [LARGE SCALE GENOMIC DNA]</scope>
    <source>
        <strain>BNC1</strain>
    </source>
</reference>
<protein>
    <recommendedName>
        <fullName evidence="1">ATP synthase subunit alpha</fullName>
        <ecNumber evidence="1">7.1.2.2</ecNumber>
    </recommendedName>
    <alternativeName>
        <fullName evidence="1">ATP synthase F1 sector subunit alpha</fullName>
    </alternativeName>
    <alternativeName>
        <fullName evidence="1">F-ATPase subunit alpha</fullName>
    </alternativeName>
</protein>
<keyword id="KW-0066">ATP synthesis</keyword>
<keyword id="KW-0067">ATP-binding</keyword>
<keyword id="KW-0997">Cell inner membrane</keyword>
<keyword id="KW-1003">Cell membrane</keyword>
<keyword id="KW-0139">CF(1)</keyword>
<keyword id="KW-0375">Hydrogen ion transport</keyword>
<keyword id="KW-0406">Ion transport</keyword>
<keyword id="KW-0472">Membrane</keyword>
<keyword id="KW-0547">Nucleotide-binding</keyword>
<keyword id="KW-1278">Translocase</keyword>
<keyword id="KW-0813">Transport</keyword>
<proteinExistence type="inferred from homology"/>
<organism>
    <name type="scientific">Chelativorans sp. (strain BNC1)</name>
    <dbReference type="NCBI Taxonomy" id="266779"/>
    <lineage>
        <taxon>Bacteria</taxon>
        <taxon>Pseudomonadati</taxon>
        <taxon>Pseudomonadota</taxon>
        <taxon>Alphaproteobacteria</taxon>
        <taxon>Hyphomicrobiales</taxon>
        <taxon>Phyllobacteriaceae</taxon>
        <taxon>Chelativorans</taxon>
    </lineage>
</organism>
<comment type="function">
    <text evidence="1">Produces ATP from ADP in the presence of a proton gradient across the membrane. The alpha chain is a regulatory subunit.</text>
</comment>
<comment type="catalytic activity">
    <reaction evidence="1">
        <text>ATP + H2O + 4 H(+)(in) = ADP + phosphate + 5 H(+)(out)</text>
        <dbReference type="Rhea" id="RHEA:57720"/>
        <dbReference type="ChEBI" id="CHEBI:15377"/>
        <dbReference type="ChEBI" id="CHEBI:15378"/>
        <dbReference type="ChEBI" id="CHEBI:30616"/>
        <dbReference type="ChEBI" id="CHEBI:43474"/>
        <dbReference type="ChEBI" id="CHEBI:456216"/>
        <dbReference type="EC" id="7.1.2.2"/>
    </reaction>
</comment>
<comment type="subunit">
    <text evidence="1">F-type ATPases have 2 components, CF(1) - the catalytic core - and CF(0) - the membrane proton channel. CF(1) has five subunits: alpha(3), beta(3), gamma(1), delta(1), epsilon(1). CF(0) has three main subunits: a(1), b(2) and c(9-12). The alpha and beta chains form an alternating ring which encloses part of the gamma chain. CF(1) is attached to CF(0) by a central stalk formed by the gamma and epsilon chains, while a peripheral stalk is formed by the delta and b chains.</text>
</comment>
<comment type="subcellular location">
    <subcellularLocation>
        <location evidence="1">Cell inner membrane</location>
        <topology evidence="1">Peripheral membrane protein</topology>
    </subcellularLocation>
</comment>
<comment type="similarity">
    <text evidence="1">Belongs to the ATPase alpha/beta chains family.</text>
</comment>
<accession>Q11DD7</accession>
<evidence type="ECO:0000255" key="1">
    <source>
        <dbReference type="HAMAP-Rule" id="MF_01346"/>
    </source>
</evidence>
<name>ATPA_CHESB</name>
<dbReference type="EC" id="7.1.2.2" evidence="1"/>
<dbReference type="EMBL" id="CP000390">
    <property type="protein sequence ID" value="ABG64588.1"/>
    <property type="molecule type" value="Genomic_DNA"/>
</dbReference>
<dbReference type="SMR" id="Q11DD7"/>
<dbReference type="STRING" id="266779.Meso_3216"/>
<dbReference type="KEGG" id="mes:Meso_3216"/>
<dbReference type="eggNOG" id="COG0056">
    <property type="taxonomic scope" value="Bacteria"/>
</dbReference>
<dbReference type="HOGENOM" id="CLU_010091_2_1_5"/>
<dbReference type="OrthoDB" id="9803053at2"/>
<dbReference type="GO" id="GO:0005886">
    <property type="term" value="C:plasma membrane"/>
    <property type="evidence" value="ECO:0007669"/>
    <property type="project" value="UniProtKB-SubCell"/>
</dbReference>
<dbReference type="GO" id="GO:0045259">
    <property type="term" value="C:proton-transporting ATP synthase complex"/>
    <property type="evidence" value="ECO:0007669"/>
    <property type="project" value="UniProtKB-KW"/>
</dbReference>
<dbReference type="GO" id="GO:0043531">
    <property type="term" value="F:ADP binding"/>
    <property type="evidence" value="ECO:0007669"/>
    <property type="project" value="TreeGrafter"/>
</dbReference>
<dbReference type="GO" id="GO:0005524">
    <property type="term" value="F:ATP binding"/>
    <property type="evidence" value="ECO:0007669"/>
    <property type="project" value="UniProtKB-UniRule"/>
</dbReference>
<dbReference type="GO" id="GO:0046933">
    <property type="term" value="F:proton-transporting ATP synthase activity, rotational mechanism"/>
    <property type="evidence" value="ECO:0007669"/>
    <property type="project" value="UniProtKB-UniRule"/>
</dbReference>
<dbReference type="CDD" id="cd18113">
    <property type="entry name" value="ATP-synt_F1_alpha_C"/>
    <property type="match status" value="1"/>
</dbReference>
<dbReference type="CDD" id="cd18116">
    <property type="entry name" value="ATP-synt_F1_alpha_N"/>
    <property type="match status" value="1"/>
</dbReference>
<dbReference type="CDD" id="cd01132">
    <property type="entry name" value="F1-ATPase_alpha_CD"/>
    <property type="match status" value="1"/>
</dbReference>
<dbReference type="FunFam" id="1.20.150.20:FF:000001">
    <property type="entry name" value="ATP synthase subunit alpha"/>
    <property type="match status" value="1"/>
</dbReference>
<dbReference type="FunFam" id="2.40.30.20:FF:000001">
    <property type="entry name" value="ATP synthase subunit alpha"/>
    <property type="match status" value="1"/>
</dbReference>
<dbReference type="FunFam" id="3.40.50.300:FF:002432">
    <property type="entry name" value="ATP synthase subunit alpha, mitochondrial"/>
    <property type="match status" value="1"/>
</dbReference>
<dbReference type="Gene3D" id="2.40.30.20">
    <property type="match status" value="1"/>
</dbReference>
<dbReference type="Gene3D" id="1.20.150.20">
    <property type="entry name" value="ATP synthase alpha/beta chain, C-terminal domain"/>
    <property type="match status" value="1"/>
</dbReference>
<dbReference type="Gene3D" id="3.40.50.300">
    <property type="entry name" value="P-loop containing nucleotide triphosphate hydrolases"/>
    <property type="match status" value="1"/>
</dbReference>
<dbReference type="HAMAP" id="MF_01346">
    <property type="entry name" value="ATP_synth_alpha_bact"/>
    <property type="match status" value="1"/>
</dbReference>
<dbReference type="InterPro" id="IPR023366">
    <property type="entry name" value="ATP_synth_asu-like_sf"/>
</dbReference>
<dbReference type="InterPro" id="IPR000793">
    <property type="entry name" value="ATP_synth_asu_C"/>
</dbReference>
<dbReference type="InterPro" id="IPR038376">
    <property type="entry name" value="ATP_synth_asu_C_sf"/>
</dbReference>
<dbReference type="InterPro" id="IPR033732">
    <property type="entry name" value="ATP_synth_F1_a_nt-bd_dom"/>
</dbReference>
<dbReference type="InterPro" id="IPR005294">
    <property type="entry name" value="ATP_synth_F1_asu"/>
</dbReference>
<dbReference type="InterPro" id="IPR020003">
    <property type="entry name" value="ATPase_a/bsu_AS"/>
</dbReference>
<dbReference type="InterPro" id="IPR004100">
    <property type="entry name" value="ATPase_F1/V1/A1_a/bsu_N"/>
</dbReference>
<dbReference type="InterPro" id="IPR036121">
    <property type="entry name" value="ATPase_F1/V1/A1_a/bsu_N_sf"/>
</dbReference>
<dbReference type="InterPro" id="IPR000194">
    <property type="entry name" value="ATPase_F1/V1/A1_a/bsu_nucl-bd"/>
</dbReference>
<dbReference type="InterPro" id="IPR027417">
    <property type="entry name" value="P-loop_NTPase"/>
</dbReference>
<dbReference type="NCBIfam" id="TIGR00962">
    <property type="entry name" value="atpA"/>
    <property type="match status" value="1"/>
</dbReference>
<dbReference type="NCBIfam" id="NF009884">
    <property type="entry name" value="PRK13343.1"/>
    <property type="match status" value="1"/>
</dbReference>
<dbReference type="PANTHER" id="PTHR48082">
    <property type="entry name" value="ATP SYNTHASE SUBUNIT ALPHA, MITOCHONDRIAL"/>
    <property type="match status" value="1"/>
</dbReference>
<dbReference type="PANTHER" id="PTHR48082:SF2">
    <property type="entry name" value="ATP SYNTHASE SUBUNIT ALPHA, MITOCHONDRIAL"/>
    <property type="match status" value="1"/>
</dbReference>
<dbReference type="Pfam" id="PF00006">
    <property type="entry name" value="ATP-synt_ab"/>
    <property type="match status" value="1"/>
</dbReference>
<dbReference type="Pfam" id="PF00306">
    <property type="entry name" value="ATP-synt_ab_C"/>
    <property type="match status" value="1"/>
</dbReference>
<dbReference type="Pfam" id="PF02874">
    <property type="entry name" value="ATP-synt_ab_N"/>
    <property type="match status" value="1"/>
</dbReference>
<dbReference type="PIRSF" id="PIRSF039088">
    <property type="entry name" value="F_ATPase_subunit_alpha"/>
    <property type="match status" value="1"/>
</dbReference>
<dbReference type="SUPFAM" id="SSF47917">
    <property type="entry name" value="C-terminal domain of alpha and beta subunits of F1 ATP synthase"/>
    <property type="match status" value="1"/>
</dbReference>
<dbReference type="SUPFAM" id="SSF50615">
    <property type="entry name" value="N-terminal domain of alpha and beta subunits of F1 ATP synthase"/>
    <property type="match status" value="1"/>
</dbReference>
<dbReference type="SUPFAM" id="SSF52540">
    <property type="entry name" value="P-loop containing nucleoside triphosphate hydrolases"/>
    <property type="match status" value="1"/>
</dbReference>
<dbReference type="PROSITE" id="PS00152">
    <property type="entry name" value="ATPASE_ALPHA_BETA"/>
    <property type="match status" value="1"/>
</dbReference>